<dbReference type="EC" id="5.1.3.9" evidence="1"/>
<dbReference type="EMBL" id="CP000950">
    <property type="protein sequence ID" value="ACA67695.1"/>
    <property type="molecule type" value="Genomic_DNA"/>
</dbReference>
<dbReference type="SMR" id="B1JFV9"/>
<dbReference type="KEGG" id="ypy:YPK_1401"/>
<dbReference type="PATRIC" id="fig|502800.11.peg.2039"/>
<dbReference type="UniPathway" id="UPA00629">
    <property type="reaction ID" value="UER00682"/>
</dbReference>
<dbReference type="GO" id="GO:0005829">
    <property type="term" value="C:cytosol"/>
    <property type="evidence" value="ECO:0007669"/>
    <property type="project" value="TreeGrafter"/>
</dbReference>
<dbReference type="GO" id="GO:0047465">
    <property type="term" value="F:N-acylglucosamine-6-phosphate 2-epimerase activity"/>
    <property type="evidence" value="ECO:0007669"/>
    <property type="project" value="UniProtKB-EC"/>
</dbReference>
<dbReference type="GO" id="GO:0005975">
    <property type="term" value="P:carbohydrate metabolic process"/>
    <property type="evidence" value="ECO:0007669"/>
    <property type="project" value="UniProtKB-UniRule"/>
</dbReference>
<dbReference type="GO" id="GO:0006053">
    <property type="term" value="P:N-acetylmannosamine catabolic process"/>
    <property type="evidence" value="ECO:0007669"/>
    <property type="project" value="TreeGrafter"/>
</dbReference>
<dbReference type="GO" id="GO:0019262">
    <property type="term" value="P:N-acetylneuraminate catabolic process"/>
    <property type="evidence" value="ECO:0007669"/>
    <property type="project" value="UniProtKB-UniRule"/>
</dbReference>
<dbReference type="CDD" id="cd04729">
    <property type="entry name" value="NanE"/>
    <property type="match status" value="1"/>
</dbReference>
<dbReference type="FunFam" id="3.20.20.70:FF:000035">
    <property type="entry name" value="Putative N-acetylmannosamine-6-phosphate 2-epimerase"/>
    <property type="match status" value="1"/>
</dbReference>
<dbReference type="Gene3D" id="3.20.20.70">
    <property type="entry name" value="Aldolase class I"/>
    <property type="match status" value="1"/>
</dbReference>
<dbReference type="HAMAP" id="MF_01235">
    <property type="entry name" value="ManNAc6P_epimer"/>
    <property type="match status" value="1"/>
</dbReference>
<dbReference type="InterPro" id="IPR013785">
    <property type="entry name" value="Aldolase_TIM"/>
</dbReference>
<dbReference type="InterPro" id="IPR007260">
    <property type="entry name" value="NanE"/>
</dbReference>
<dbReference type="InterPro" id="IPR011060">
    <property type="entry name" value="RibuloseP-bd_barrel"/>
</dbReference>
<dbReference type="NCBIfam" id="NF002231">
    <property type="entry name" value="PRK01130.1"/>
    <property type="match status" value="1"/>
</dbReference>
<dbReference type="PANTHER" id="PTHR36204">
    <property type="entry name" value="N-ACETYLMANNOSAMINE-6-PHOSPHATE 2-EPIMERASE-RELATED"/>
    <property type="match status" value="1"/>
</dbReference>
<dbReference type="PANTHER" id="PTHR36204:SF1">
    <property type="entry name" value="N-ACETYLMANNOSAMINE-6-PHOSPHATE 2-EPIMERASE-RELATED"/>
    <property type="match status" value="1"/>
</dbReference>
<dbReference type="Pfam" id="PF04131">
    <property type="entry name" value="NanE"/>
    <property type="match status" value="1"/>
</dbReference>
<dbReference type="SUPFAM" id="SSF51366">
    <property type="entry name" value="Ribulose-phoshate binding barrel"/>
    <property type="match status" value="1"/>
</dbReference>
<accession>B1JFV9</accession>
<feature type="chain" id="PRO_1000139718" description="Putative N-acetylmannosamine-6-phosphate 2-epimerase">
    <location>
        <begin position="1"/>
        <end position="233"/>
    </location>
</feature>
<gene>
    <name evidence="1" type="primary">nanE</name>
    <name type="ordered locus">YPK_1401</name>
</gene>
<proteinExistence type="inferred from homology"/>
<organism>
    <name type="scientific">Yersinia pseudotuberculosis serotype O:3 (strain YPIII)</name>
    <dbReference type="NCBI Taxonomy" id="502800"/>
    <lineage>
        <taxon>Bacteria</taxon>
        <taxon>Pseudomonadati</taxon>
        <taxon>Pseudomonadota</taxon>
        <taxon>Gammaproteobacteria</taxon>
        <taxon>Enterobacterales</taxon>
        <taxon>Yersiniaceae</taxon>
        <taxon>Yersinia</taxon>
    </lineage>
</organism>
<name>NANE_YERPY</name>
<keyword id="KW-0119">Carbohydrate metabolism</keyword>
<keyword id="KW-0413">Isomerase</keyword>
<evidence type="ECO:0000255" key="1">
    <source>
        <dbReference type="HAMAP-Rule" id="MF_01235"/>
    </source>
</evidence>
<reference key="1">
    <citation type="submission" date="2008-02" db="EMBL/GenBank/DDBJ databases">
        <title>Complete sequence of Yersinia pseudotuberculosis YPIII.</title>
        <authorList>
            <consortium name="US DOE Joint Genome Institute"/>
            <person name="Copeland A."/>
            <person name="Lucas S."/>
            <person name="Lapidus A."/>
            <person name="Glavina del Rio T."/>
            <person name="Dalin E."/>
            <person name="Tice H."/>
            <person name="Bruce D."/>
            <person name="Goodwin L."/>
            <person name="Pitluck S."/>
            <person name="Munk A.C."/>
            <person name="Brettin T."/>
            <person name="Detter J.C."/>
            <person name="Han C."/>
            <person name="Tapia R."/>
            <person name="Schmutz J."/>
            <person name="Larimer F."/>
            <person name="Land M."/>
            <person name="Hauser L."/>
            <person name="Challacombe J.F."/>
            <person name="Green L."/>
            <person name="Lindler L.E."/>
            <person name="Nikolich M.P."/>
            <person name="Richardson P."/>
        </authorList>
    </citation>
    <scope>NUCLEOTIDE SEQUENCE [LARGE SCALE GENOMIC DNA]</scope>
    <source>
        <strain>YPIII</strain>
    </source>
</reference>
<protein>
    <recommendedName>
        <fullName evidence="1">Putative N-acetylmannosamine-6-phosphate 2-epimerase</fullName>
        <ecNumber evidence="1">5.1.3.9</ecNumber>
    </recommendedName>
    <alternativeName>
        <fullName evidence="1">ManNAc-6-P epimerase</fullName>
    </alternativeName>
</protein>
<sequence>MSNLNNLRHKLQNGLIASCQPVPGSAMDTPEIVAAMACAALAGGAVGLRIEGINNIRAVRRATDAPIIGIIKRDLPDSEVRITPWLEDIDALSAAGADIIAFDVTCRERPVSVADLYQRARATGCLTMADASNIDDGLLAHHLGIDFIGTTLSGYTQATVPTEPDLALVTQLAQAGCRVIAEGRYHSPALAAAAISAGAYAVTVGSAITRIEHICGWFCDAIKQCETEKLTEY</sequence>
<comment type="function">
    <text evidence="1">Converts N-acetylmannosamine-6-phosphate (ManNAc-6-P) to N-acetylglucosamine-6-phosphate (GlcNAc-6-P).</text>
</comment>
<comment type="catalytic activity">
    <reaction evidence="1">
        <text>an N-acyl-D-glucosamine 6-phosphate = an N-acyl-D-mannosamine 6-phosphate</text>
        <dbReference type="Rhea" id="RHEA:23932"/>
        <dbReference type="ChEBI" id="CHEBI:57599"/>
        <dbReference type="ChEBI" id="CHEBI:57666"/>
        <dbReference type="EC" id="5.1.3.9"/>
    </reaction>
</comment>
<comment type="pathway">
    <text evidence="1">Amino-sugar metabolism; N-acetylneuraminate degradation; D-fructose 6-phosphate from N-acetylneuraminate: step 3/5.</text>
</comment>
<comment type="similarity">
    <text evidence="1">Belongs to the NanE family.</text>
</comment>